<organism>
    <name type="scientific">Bacillus cereus (strain AH820)</name>
    <dbReference type="NCBI Taxonomy" id="405535"/>
    <lineage>
        <taxon>Bacteria</taxon>
        <taxon>Bacillati</taxon>
        <taxon>Bacillota</taxon>
        <taxon>Bacilli</taxon>
        <taxon>Bacillales</taxon>
        <taxon>Bacillaceae</taxon>
        <taxon>Bacillus</taxon>
        <taxon>Bacillus cereus group</taxon>
    </lineage>
</organism>
<name>IOLE_BACC0</name>
<proteinExistence type="inferred from homology"/>
<sequence length="298" mass="33615">MFKENTIKLGIAPIAWTNDDMPELGAENTFEQCISEMALAGFNGSEVGNKYPRNTVVLKKSLELRNLEIASAWFSTFLTTKPIEETVEEFIKHRDFLHDMGAKVIVVSEQGHSIQGLMDVPLFKNKPVFTEEEWDKLADGLHHLGKLAQEKGLHIVYHHHMGTGVQTTAEIEKLMDMTDPELVSLLFDTGHLVFSGEEPLYILKKYLSRIKHVHLKDIRQEVVDIVKENELSFLQAVKNGAFTVPGDGVIGFDKVFTILANSDYKGWFVVEAEQDPALANPFEYALKARKFIQEKAGL</sequence>
<keyword id="KW-0170">Cobalt</keyword>
<keyword id="KW-0456">Lyase</keyword>
<keyword id="KW-0464">Manganese</keyword>
<comment type="function">
    <text evidence="1">Catalyzes the dehydration of inosose (2-keto-myo-inositol, 2KMI or 2,4,6/3,5-pentahydroxycyclohexanone) to 3D-(3,5/4)-trihydroxycyclohexane-1,2-dione (D-2,3-diketo-4-deoxy-epi-inositol).</text>
</comment>
<comment type="catalytic activity">
    <reaction evidence="1">
        <text>scyllo-inosose = 3D-3,5/4-trihydroxycyclohexane-1,2-dione + H2O</text>
        <dbReference type="Rhea" id="RHEA:14065"/>
        <dbReference type="ChEBI" id="CHEBI:15377"/>
        <dbReference type="ChEBI" id="CHEBI:17811"/>
        <dbReference type="ChEBI" id="CHEBI:28446"/>
        <dbReference type="EC" id="4.2.1.44"/>
    </reaction>
</comment>
<comment type="cofactor">
    <cofactor evidence="1">
        <name>glutathione</name>
        <dbReference type="ChEBI" id="CHEBI:57925"/>
    </cofactor>
</comment>
<comment type="cofactor">
    <cofactor evidence="1">
        <name>Co(2+)</name>
        <dbReference type="ChEBI" id="CHEBI:48828"/>
    </cofactor>
    <cofactor evidence="1">
        <name>Mn(2+)</name>
        <dbReference type="ChEBI" id="CHEBI:29035"/>
    </cofactor>
</comment>
<comment type="pathway">
    <text evidence="1">Polyol metabolism; myo-inositol degradation into acetyl-CoA; acetyl-CoA from myo-inositol: step 2/7.</text>
</comment>
<comment type="similarity">
    <text evidence="1">Belongs to the IolE/MocC family.</text>
</comment>
<accession>B7JPM4</accession>
<gene>
    <name evidence="1" type="primary">iolE</name>
    <name type="ordered locus">BCAH820_2531</name>
</gene>
<reference key="1">
    <citation type="submission" date="2008-10" db="EMBL/GenBank/DDBJ databases">
        <title>Genome sequence of Bacillus cereus AH820.</title>
        <authorList>
            <person name="Dodson R.J."/>
            <person name="Durkin A.S."/>
            <person name="Rosovitz M.J."/>
            <person name="Rasko D.A."/>
            <person name="Hoffmaster A."/>
            <person name="Ravel J."/>
            <person name="Sutton G."/>
        </authorList>
    </citation>
    <scope>NUCLEOTIDE SEQUENCE [LARGE SCALE GENOMIC DNA]</scope>
    <source>
        <strain>AH820</strain>
    </source>
</reference>
<dbReference type="EC" id="4.2.1.44" evidence="1"/>
<dbReference type="EMBL" id="CP001283">
    <property type="protein sequence ID" value="ACK89252.1"/>
    <property type="molecule type" value="Genomic_DNA"/>
</dbReference>
<dbReference type="RefSeq" id="WP_000471982.1">
    <property type="nucleotide sequence ID" value="NC_011773.1"/>
</dbReference>
<dbReference type="SMR" id="B7JPM4"/>
<dbReference type="KEGG" id="bcu:BCAH820_2531"/>
<dbReference type="HOGENOM" id="CLU_059523_0_0_9"/>
<dbReference type="UniPathway" id="UPA00076">
    <property type="reaction ID" value="UER00144"/>
</dbReference>
<dbReference type="Proteomes" id="UP000001363">
    <property type="component" value="Chromosome"/>
</dbReference>
<dbReference type="GO" id="GO:0030145">
    <property type="term" value="F:manganese ion binding"/>
    <property type="evidence" value="ECO:0007669"/>
    <property type="project" value="UniProtKB-UniRule"/>
</dbReference>
<dbReference type="GO" id="GO:0050114">
    <property type="term" value="F:myo-inosose-2 dehydratase activity"/>
    <property type="evidence" value="ECO:0007669"/>
    <property type="project" value="UniProtKB-UniRule"/>
</dbReference>
<dbReference type="GO" id="GO:0019310">
    <property type="term" value="P:inositol catabolic process"/>
    <property type="evidence" value="ECO:0007669"/>
    <property type="project" value="UniProtKB-UniRule"/>
</dbReference>
<dbReference type="Gene3D" id="3.20.20.150">
    <property type="entry name" value="Divalent-metal-dependent TIM barrel enzymes"/>
    <property type="match status" value="1"/>
</dbReference>
<dbReference type="HAMAP" id="MF_01672">
    <property type="entry name" value="IolE"/>
    <property type="match status" value="1"/>
</dbReference>
<dbReference type="InterPro" id="IPR023952">
    <property type="entry name" value="IolE"/>
</dbReference>
<dbReference type="InterPro" id="IPR030823">
    <property type="entry name" value="IolE/MocC"/>
</dbReference>
<dbReference type="InterPro" id="IPR050312">
    <property type="entry name" value="IolE/XylAMocC-like"/>
</dbReference>
<dbReference type="InterPro" id="IPR036237">
    <property type="entry name" value="Xyl_isomerase-like_sf"/>
</dbReference>
<dbReference type="InterPro" id="IPR013022">
    <property type="entry name" value="Xyl_isomerase-like_TIM-brl"/>
</dbReference>
<dbReference type="NCBIfam" id="TIGR04379">
    <property type="entry name" value="myo_inos_iolE"/>
    <property type="match status" value="1"/>
</dbReference>
<dbReference type="PANTHER" id="PTHR12110">
    <property type="entry name" value="HYDROXYPYRUVATE ISOMERASE"/>
    <property type="match status" value="1"/>
</dbReference>
<dbReference type="PANTHER" id="PTHR12110:SF41">
    <property type="entry name" value="INOSOSE DEHYDRATASE"/>
    <property type="match status" value="1"/>
</dbReference>
<dbReference type="Pfam" id="PF01261">
    <property type="entry name" value="AP_endonuc_2"/>
    <property type="match status" value="1"/>
</dbReference>
<dbReference type="SUPFAM" id="SSF51658">
    <property type="entry name" value="Xylose isomerase-like"/>
    <property type="match status" value="1"/>
</dbReference>
<evidence type="ECO:0000255" key="1">
    <source>
        <dbReference type="HAMAP-Rule" id="MF_01672"/>
    </source>
</evidence>
<protein>
    <recommendedName>
        <fullName evidence="1">Inosose dehydratase</fullName>
        <ecNumber evidence="1">4.2.1.44</ecNumber>
    </recommendedName>
    <alternativeName>
        <fullName evidence="1">2-keto-myo-inositol dehydratase</fullName>
        <shortName evidence="1">2KMI dehydratase</shortName>
    </alternativeName>
</protein>
<feature type="chain" id="PRO_1000187323" description="Inosose dehydratase">
    <location>
        <begin position="1"/>
        <end position="298"/>
    </location>
</feature>